<comment type="function">
    <text evidence="1">May play a role in DNA repair. It seems to be involved in an RecBC-independent recombinational process of DNA repair. It may act with RecF and RecO.</text>
</comment>
<comment type="similarity">
    <text evidence="1">Belongs to the RecR family.</text>
</comment>
<dbReference type="EMBL" id="CP000359">
    <property type="protein sequence ID" value="ABF45808.1"/>
    <property type="molecule type" value="Genomic_DNA"/>
</dbReference>
<dbReference type="RefSeq" id="WP_011530642.1">
    <property type="nucleotide sequence ID" value="NC_008025.1"/>
</dbReference>
<dbReference type="SMR" id="Q1IY76"/>
<dbReference type="STRING" id="319795.Dgeo_1513"/>
<dbReference type="KEGG" id="dge:Dgeo_1513"/>
<dbReference type="eggNOG" id="COG0353">
    <property type="taxonomic scope" value="Bacteria"/>
</dbReference>
<dbReference type="HOGENOM" id="CLU_060739_1_0_0"/>
<dbReference type="Proteomes" id="UP000002431">
    <property type="component" value="Chromosome"/>
</dbReference>
<dbReference type="GO" id="GO:0003677">
    <property type="term" value="F:DNA binding"/>
    <property type="evidence" value="ECO:0007669"/>
    <property type="project" value="UniProtKB-UniRule"/>
</dbReference>
<dbReference type="GO" id="GO:0008270">
    <property type="term" value="F:zinc ion binding"/>
    <property type="evidence" value="ECO:0007669"/>
    <property type="project" value="UniProtKB-KW"/>
</dbReference>
<dbReference type="GO" id="GO:0006310">
    <property type="term" value="P:DNA recombination"/>
    <property type="evidence" value="ECO:0007669"/>
    <property type="project" value="UniProtKB-UniRule"/>
</dbReference>
<dbReference type="GO" id="GO:0006281">
    <property type="term" value="P:DNA repair"/>
    <property type="evidence" value="ECO:0007669"/>
    <property type="project" value="UniProtKB-UniRule"/>
</dbReference>
<dbReference type="CDD" id="cd01025">
    <property type="entry name" value="TOPRIM_recR"/>
    <property type="match status" value="1"/>
</dbReference>
<dbReference type="Gene3D" id="3.30.60.80">
    <property type="match status" value="1"/>
</dbReference>
<dbReference type="Gene3D" id="3.40.1360.10">
    <property type="match status" value="1"/>
</dbReference>
<dbReference type="Gene3D" id="6.10.250.240">
    <property type="match status" value="1"/>
</dbReference>
<dbReference type="Gene3D" id="1.10.8.420">
    <property type="entry name" value="RecR Domain 1"/>
    <property type="match status" value="1"/>
</dbReference>
<dbReference type="HAMAP" id="MF_00017">
    <property type="entry name" value="RecR"/>
    <property type="match status" value="1"/>
</dbReference>
<dbReference type="InterPro" id="IPR000093">
    <property type="entry name" value="DNA_Rcmb_RecR"/>
</dbReference>
<dbReference type="InterPro" id="IPR003583">
    <property type="entry name" value="Hlx-hairpin-Hlx_DNA-bd_motif"/>
</dbReference>
<dbReference type="InterPro" id="IPR023627">
    <property type="entry name" value="Rcmb_RecR"/>
</dbReference>
<dbReference type="InterPro" id="IPR015967">
    <property type="entry name" value="Rcmb_RecR_Znf"/>
</dbReference>
<dbReference type="InterPro" id="IPR006171">
    <property type="entry name" value="TOPRIM_dom"/>
</dbReference>
<dbReference type="InterPro" id="IPR034137">
    <property type="entry name" value="TOPRIM_RecR"/>
</dbReference>
<dbReference type="NCBIfam" id="TIGR00615">
    <property type="entry name" value="recR"/>
    <property type="match status" value="1"/>
</dbReference>
<dbReference type="PANTHER" id="PTHR30446">
    <property type="entry name" value="RECOMBINATION PROTEIN RECR"/>
    <property type="match status" value="1"/>
</dbReference>
<dbReference type="PANTHER" id="PTHR30446:SF0">
    <property type="entry name" value="RECOMBINATION PROTEIN RECR"/>
    <property type="match status" value="1"/>
</dbReference>
<dbReference type="Pfam" id="PF21175">
    <property type="entry name" value="RecR_C"/>
    <property type="match status" value="1"/>
</dbReference>
<dbReference type="Pfam" id="PF21176">
    <property type="entry name" value="RecR_HhH"/>
    <property type="match status" value="1"/>
</dbReference>
<dbReference type="Pfam" id="PF02132">
    <property type="entry name" value="RecR_ZnF"/>
    <property type="match status" value="1"/>
</dbReference>
<dbReference type="Pfam" id="PF13662">
    <property type="entry name" value="Toprim_4"/>
    <property type="match status" value="1"/>
</dbReference>
<dbReference type="SMART" id="SM00278">
    <property type="entry name" value="HhH1"/>
    <property type="match status" value="1"/>
</dbReference>
<dbReference type="SMART" id="SM00493">
    <property type="entry name" value="TOPRIM"/>
    <property type="match status" value="1"/>
</dbReference>
<dbReference type="SUPFAM" id="SSF111304">
    <property type="entry name" value="Recombination protein RecR"/>
    <property type="match status" value="1"/>
</dbReference>
<dbReference type="PROSITE" id="PS01300">
    <property type="entry name" value="RECR"/>
    <property type="match status" value="1"/>
</dbReference>
<dbReference type="PROSITE" id="PS50880">
    <property type="entry name" value="TOPRIM"/>
    <property type="match status" value="1"/>
</dbReference>
<evidence type="ECO:0000255" key="1">
    <source>
        <dbReference type="HAMAP-Rule" id="MF_00017"/>
    </source>
</evidence>
<evidence type="ECO:0000256" key="2">
    <source>
        <dbReference type="SAM" id="MobiDB-lite"/>
    </source>
</evidence>
<reference key="1">
    <citation type="submission" date="2006-04" db="EMBL/GenBank/DDBJ databases">
        <title>Complete sequence of chromosome of Deinococcus geothermalis DSM 11300.</title>
        <authorList>
            <person name="Copeland A."/>
            <person name="Lucas S."/>
            <person name="Lapidus A."/>
            <person name="Barry K."/>
            <person name="Detter J.C."/>
            <person name="Glavina del Rio T."/>
            <person name="Hammon N."/>
            <person name="Israni S."/>
            <person name="Dalin E."/>
            <person name="Tice H."/>
            <person name="Pitluck S."/>
            <person name="Brettin T."/>
            <person name="Bruce D."/>
            <person name="Han C."/>
            <person name="Tapia R."/>
            <person name="Saunders E."/>
            <person name="Gilna P."/>
            <person name="Schmutz J."/>
            <person name="Larimer F."/>
            <person name="Land M."/>
            <person name="Hauser L."/>
            <person name="Kyrpides N."/>
            <person name="Kim E."/>
            <person name="Daly M.J."/>
            <person name="Fredrickson J.K."/>
            <person name="Makarova K.S."/>
            <person name="Gaidamakova E.K."/>
            <person name="Zhai M."/>
            <person name="Richardson P."/>
        </authorList>
    </citation>
    <scope>NUCLEOTIDE SEQUENCE [LARGE SCALE GENOMIC DNA]</scope>
    <source>
        <strain>DSM 11300 / CIP 105573 / AG-3a</strain>
    </source>
</reference>
<protein>
    <recommendedName>
        <fullName evidence="1">Recombination protein RecR</fullName>
    </recommendedName>
</protein>
<name>RECR_DEIGD</name>
<accession>Q1IY76</accession>
<feature type="chain" id="PRO_1000001534" description="Recombination protein RecR">
    <location>
        <begin position="1"/>
        <end position="222"/>
    </location>
</feature>
<feature type="domain" description="Toprim" evidence="1">
    <location>
        <begin position="80"/>
        <end position="173"/>
    </location>
</feature>
<feature type="zinc finger region" description="C4-type" evidence="1">
    <location>
        <begin position="57"/>
        <end position="72"/>
    </location>
</feature>
<feature type="region of interest" description="Disordered" evidence="2">
    <location>
        <begin position="189"/>
        <end position="222"/>
    </location>
</feature>
<sequence>MKYPPSLVGLIRELSRLPGIGPKSAQRLAFYLFEQPREDIERLAGAILEAKRDLHTCPVCFNITDAERCDVCSDPTRDQSVICVVEEPGDVIAIERSGEYRGLYHVLHGALSPMNGVGPDRLQIRPLLPRVQDGMEVILATGTTVEGDATALYLQRLLEPLGAVVSRIAYGLPVGGALEYADEVTLGRALSGRRRVSEPASPPPPRRNDEEQDGAPARPPSH</sequence>
<organism>
    <name type="scientific">Deinococcus geothermalis (strain DSM 11300 / CIP 105573 / AG-3a)</name>
    <dbReference type="NCBI Taxonomy" id="319795"/>
    <lineage>
        <taxon>Bacteria</taxon>
        <taxon>Thermotogati</taxon>
        <taxon>Deinococcota</taxon>
        <taxon>Deinococci</taxon>
        <taxon>Deinococcales</taxon>
        <taxon>Deinococcaceae</taxon>
        <taxon>Deinococcus</taxon>
    </lineage>
</organism>
<gene>
    <name evidence="1" type="primary">recR</name>
    <name type="ordered locus">Dgeo_1513</name>
</gene>
<proteinExistence type="inferred from homology"/>
<keyword id="KW-0227">DNA damage</keyword>
<keyword id="KW-0233">DNA recombination</keyword>
<keyword id="KW-0234">DNA repair</keyword>
<keyword id="KW-0479">Metal-binding</keyword>
<keyword id="KW-0862">Zinc</keyword>
<keyword id="KW-0863">Zinc-finger</keyword>